<keyword id="KW-0648">Protein biosynthesis</keyword>
<keyword id="KW-1185">Reference proteome</keyword>
<keyword id="KW-0808">Transferase</keyword>
<evidence type="ECO:0000255" key="1">
    <source>
        <dbReference type="HAMAP-Rule" id="MF_00182"/>
    </source>
</evidence>
<organism>
    <name type="scientific">Heliobacterium modesticaldum (strain ATCC 51547 / Ice1)</name>
    <dbReference type="NCBI Taxonomy" id="498761"/>
    <lineage>
        <taxon>Bacteria</taxon>
        <taxon>Bacillati</taxon>
        <taxon>Bacillota</taxon>
        <taxon>Clostridia</taxon>
        <taxon>Eubacteriales</taxon>
        <taxon>Heliobacteriaceae</taxon>
        <taxon>Heliomicrobium</taxon>
    </lineage>
</organism>
<dbReference type="EC" id="2.1.2.9" evidence="1"/>
<dbReference type="EMBL" id="CP000930">
    <property type="protein sequence ID" value="ABZ84690.1"/>
    <property type="molecule type" value="Genomic_DNA"/>
</dbReference>
<dbReference type="RefSeq" id="WP_012283190.1">
    <property type="nucleotide sequence ID" value="NC_010337.2"/>
</dbReference>
<dbReference type="SMR" id="B0TGS9"/>
<dbReference type="STRING" id="498761.HM1_2133"/>
<dbReference type="KEGG" id="hmo:HM1_2133"/>
<dbReference type="eggNOG" id="COG0223">
    <property type="taxonomic scope" value="Bacteria"/>
</dbReference>
<dbReference type="HOGENOM" id="CLU_033347_1_1_9"/>
<dbReference type="OrthoDB" id="9802815at2"/>
<dbReference type="Proteomes" id="UP000008550">
    <property type="component" value="Chromosome"/>
</dbReference>
<dbReference type="GO" id="GO:0005829">
    <property type="term" value="C:cytosol"/>
    <property type="evidence" value="ECO:0007669"/>
    <property type="project" value="TreeGrafter"/>
</dbReference>
<dbReference type="GO" id="GO:0004479">
    <property type="term" value="F:methionyl-tRNA formyltransferase activity"/>
    <property type="evidence" value="ECO:0007669"/>
    <property type="project" value="UniProtKB-UniRule"/>
</dbReference>
<dbReference type="CDD" id="cd08646">
    <property type="entry name" value="FMT_core_Met-tRNA-FMT_N"/>
    <property type="match status" value="1"/>
</dbReference>
<dbReference type="CDD" id="cd08704">
    <property type="entry name" value="Met_tRNA_FMT_C"/>
    <property type="match status" value="1"/>
</dbReference>
<dbReference type="FunFam" id="3.40.50.12230:FF:000001">
    <property type="entry name" value="Methionyl-tRNA formyltransferase"/>
    <property type="match status" value="1"/>
</dbReference>
<dbReference type="Gene3D" id="3.40.50.12230">
    <property type="match status" value="1"/>
</dbReference>
<dbReference type="HAMAP" id="MF_00182">
    <property type="entry name" value="Formyl_trans"/>
    <property type="match status" value="1"/>
</dbReference>
<dbReference type="InterPro" id="IPR005794">
    <property type="entry name" value="Fmt"/>
</dbReference>
<dbReference type="InterPro" id="IPR005793">
    <property type="entry name" value="Formyl_trans_C"/>
</dbReference>
<dbReference type="InterPro" id="IPR002376">
    <property type="entry name" value="Formyl_transf_N"/>
</dbReference>
<dbReference type="InterPro" id="IPR036477">
    <property type="entry name" value="Formyl_transf_N_sf"/>
</dbReference>
<dbReference type="InterPro" id="IPR011034">
    <property type="entry name" value="Formyl_transferase-like_C_sf"/>
</dbReference>
<dbReference type="InterPro" id="IPR001555">
    <property type="entry name" value="GART_AS"/>
</dbReference>
<dbReference type="InterPro" id="IPR044135">
    <property type="entry name" value="Met-tRNA-FMT_C"/>
</dbReference>
<dbReference type="InterPro" id="IPR041711">
    <property type="entry name" value="Met-tRNA-FMT_N"/>
</dbReference>
<dbReference type="NCBIfam" id="TIGR00460">
    <property type="entry name" value="fmt"/>
    <property type="match status" value="1"/>
</dbReference>
<dbReference type="PANTHER" id="PTHR11138">
    <property type="entry name" value="METHIONYL-TRNA FORMYLTRANSFERASE"/>
    <property type="match status" value="1"/>
</dbReference>
<dbReference type="PANTHER" id="PTHR11138:SF5">
    <property type="entry name" value="METHIONYL-TRNA FORMYLTRANSFERASE, MITOCHONDRIAL"/>
    <property type="match status" value="1"/>
</dbReference>
<dbReference type="Pfam" id="PF02911">
    <property type="entry name" value="Formyl_trans_C"/>
    <property type="match status" value="1"/>
</dbReference>
<dbReference type="Pfam" id="PF00551">
    <property type="entry name" value="Formyl_trans_N"/>
    <property type="match status" value="1"/>
</dbReference>
<dbReference type="SUPFAM" id="SSF50486">
    <property type="entry name" value="FMT C-terminal domain-like"/>
    <property type="match status" value="1"/>
</dbReference>
<dbReference type="SUPFAM" id="SSF53328">
    <property type="entry name" value="Formyltransferase"/>
    <property type="match status" value="1"/>
</dbReference>
<dbReference type="PROSITE" id="PS00373">
    <property type="entry name" value="GART"/>
    <property type="match status" value="1"/>
</dbReference>
<name>FMT_HELMI</name>
<accession>B0TGS9</accession>
<comment type="function">
    <text evidence="1">Attaches a formyl group to the free amino group of methionyl-tRNA(fMet). The formyl group appears to play a dual role in the initiator identity of N-formylmethionyl-tRNA by promoting its recognition by IF2 and preventing the misappropriation of this tRNA by the elongation apparatus.</text>
</comment>
<comment type="catalytic activity">
    <reaction evidence="1">
        <text>L-methionyl-tRNA(fMet) + (6R)-10-formyltetrahydrofolate = N-formyl-L-methionyl-tRNA(fMet) + (6S)-5,6,7,8-tetrahydrofolate + H(+)</text>
        <dbReference type="Rhea" id="RHEA:24380"/>
        <dbReference type="Rhea" id="RHEA-COMP:9952"/>
        <dbReference type="Rhea" id="RHEA-COMP:9953"/>
        <dbReference type="ChEBI" id="CHEBI:15378"/>
        <dbReference type="ChEBI" id="CHEBI:57453"/>
        <dbReference type="ChEBI" id="CHEBI:78530"/>
        <dbReference type="ChEBI" id="CHEBI:78844"/>
        <dbReference type="ChEBI" id="CHEBI:195366"/>
        <dbReference type="EC" id="2.1.2.9"/>
    </reaction>
</comment>
<comment type="similarity">
    <text evidence="1">Belongs to the Fmt family.</text>
</comment>
<sequence length="316" mass="33843">MRLVFMGTPDFAVPTLEAIVAAGHEVALVVTRPDRPRGRGQKPQPSPVKEAALRLGLPVDHPACLDNEFVQKLKDLGVEAGVVVAFGRILPPRLLDAFPQRWINVHASLLPKYRGAAPIHRAVIDGEKETGITTMLMSEGLDEGDMLLKRSLAIGPDDTTGQVHDALAELGARLLVETLAAMEAGRLQPQPQDGSQASYAPMLARADEQVDWSAPAEAVHNRVRGMNPWPGAFTMDEGKILKILRGRLRHEGLPLPDPTGSAAHPGEILQIVGDEVAVATGAGVYWLSEVRPAGGKTMTAGAYARGRRIGPGFRFG</sequence>
<proteinExistence type="inferred from homology"/>
<reference key="1">
    <citation type="journal article" date="2008" name="J. Bacteriol.">
        <title>The genome of Heliobacterium modesticaldum, a phototrophic representative of the Firmicutes containing the simplest photosynthetic apparatus.</title>
        <authorList>
            <person name="Sattley W.M."/>
            <person name="Madigan M.T."/>
            <person name="Swingley W.D."/>
            <person name="Cheung P.C."/>
            <person name="Clocksin K.M."/>
            <person name="Conrad A.L."/>
            <person name="Dejesa L.C."/>
            <person name="Honchak B.M."/>
            <person name="Jung D.O."/>
            <person name="Karbach L.E."/>
            <person name="Kurdoglu A."/>
            <person name="Lahiri S."/>
            <person name="Mastrian S.D."/>
            <person name="Page L.E."/>
            <person name="Taylor H.L."/>
            <person name="Wang Z.T."/>
            <person name="Raymond J."/>
            <person name="Chen M."/>
            <person name="Blankenship R.E."/>
            <person name="Touchman J.W."/>
        </authorList>
    </citation>
    <scope>NUCLEOTIDE SEQUENCE [LARGE SCALE GENOMIC DNA]</scope>
    <source>
        <strain>ATCC 51547 / Ice1</strain>
    </source>
</reference>
<feature type="chain" id="PRO_1000098409" description="Methionyl-tRNA formyltransferase">
    <location>
        <begin position="1"/>
        <end position="316"/>
    </location>
</feature>
<feature type="binding site" evidence="1">
    <location>
        <begin position="108"/>
        <end position="111"/>
    </location>
    <ligand>
        <name>(6S)-5,6,7,8-tetrahydrofolate</name>
        <dbReference type="ChEBI" id="CHEBI:57453"/>
    </ligand>
</feature>
<gene>
    <name evidence="1" type="primary">fmt</name>
    <name type="ordered locus">Helmi_20650</name>
    <name type="ORF">HM1_2133</name>
</gene>
<protein>
    <recommendedName>
        <fullName evidence="1">Methionyl-tRNA formyltransferase</fullName>
        <ecNumber evidence="1">2.1.2.9</ecNumber>
    </recommendedName>
</protein>